<gene>
    <name evidence="1" type="primary">rpsE</name>
    <name type="ordered locus">BAV0051</name>
</gene>
<feature type="chain" id="PRO_0000323078" description="Small ribosomal subunit protein uS5">
    <location>
        <begin position="1"/>
        <end position="173"/>
    </location>
</feature>
<feature type="domain" description="S5 DRBM" evidence="1">
    <location>
        <begin position="18"/>
        <end position="81"/>
    </location>
</feature>
<reference key="1">
    <citation type="journal article" date="2006" name="J. Bacteriol.">
        <title>Comparison of the genome sequence of the poultry pathogen Bordetella avium with those of B. bronchiseptica, B. pertussis, and B. parapertussis reveals extensive diversity in surface structures associated with host interaction.</title>
        <authorList>
            <person name="Sebaihia M."/>
            <person name="Preston A."/>
            <person name="Maskell D.J."/>
            <person name="Kuzmiak H."/>
            <person name="Connell T.D."/>
            <person name="King N.D."/>
            <person name="Orndorff P.E."/>
            <person name="Miyamoto D.M."/>
            <person name="Thomson N.R."/>
            <person name="Harris D."/>
            <person name="Goble A."/>
            <person name="Lord A."/>
            <person name="Murphy L."/>
            <person name="Quail M.A."/>
            <person name="Rutter S."/>
            <person name="Squares R."/>
            <person name="Squares S."/>
            <person name="Woodward J."/>
            <person name="Parkhill J."/>
            <person name="Temple L.M."/>
        </authorList>
    </citation>
    <scope>NUCLEOTIDE SEQUENCE [LARGE SCALE GENOMIC DNA]</scope>
    <source>
        <strain>197N</strain>
    </source>
</reference>
<keyword id="KW-1185">Reference proteome</keyword>
<keyword id="KW-0687">Ribonucleoprotein</keyword>
<keyword id="KW-0689">Ribosomal protein</keyword>
<keyword id="KW-0694">RNA-binding</keyword>
<keyword id="KW-0699">rRNA-binding</keyword>
<protein>
    <recommendedName>
        <fullName evidence="1">Small ribosomal subunit protein uS5</fullName>
    </recommendedName>
    <alternativeName>
        <fullName evidence="2">30S ribosomal protein S5</fullName>
    </alternativeName>
</protein>
<comment type="function">
    <text evidence="1">With S4 and S12 plays an important role in translational accuracy.</text>
</comment>
<comment type="function">
    <text evidence="1">Located at the back of the 30S subunit body where it stabilizes the conformation of the head with respect to the body.</text>
</comment>
<comment type="subunit">
    <text evidence="1">Part of the 30S ribosomal subunit. Contacts proteins S4 and S8.</text>
</comment>
<comment type="domain">
    <text>The N-terminal domain interacts with the head of the 30S subunit; the C-terminal domain interacts with the body and contacts protein S4. The interaction surface between S4 and S5 is involved in control of translational fidelity.</text>
</comment>
<comment type="similarity">
    <text evidence="1">Belongs to the universal ribosomal protein uS5 family.</text>
</comment>
<accession>Q2L266</accession>
<evidence type="ECO:0000255" key="1">
    <source>
        <dbReference type="HAMAP-Rule" id="MF_01307"/>
    </source>
</evidence>
<evidence type="ECO:0000305" key="2"/>
<dbReference type="EMBL" id="AM167904">
    <property type="protein sequence ID" value="CAJ47635.1"/>
    <property type="molecule type" value="Genomic_DNA"/>
</dbReference>
<dbReference type="RefSeq" id="WP_012415757.1">
    <property type="nucleotide sequence ID" value="NC_010645.1"/>
</dbReference>
<dbReference type="SMR" id="Q2L266"/>
<dbReference type="STRING" id="360910.BAV0051"/>
<dbReference type="GeneID" id="92936704"/>
<dbReference type="KEGG" id="bav:BAV0051"/>
<dbReference type="eggNOG" id="COG0098">
    <property type="taxonomic scope" value="Bacteria"/>
</dbReference>
<dbReference type="HOGENOM" id="CLU_065898_2_2_4"/>
<dbReference type="OrthoDB" id="9809045at2"/>
<dbReference type="Proteomes" id="UP000001977">
    <property type="component" value="Chromosome"/>
</dbReference>
<dbReference type="GO" id="GO:0015935">
    <property type="term" value="C:small ribosomal subunit"/>
    <property type="evidence" value="ECO:0007669"/>
    <property type="project" value="InterPro"/>
</dbReference>
<dbReference type="GO" id="GO:0019843">
    <property type="term" value="F:rRNA binding"/>
    <property type="evidence" value="ECO:0007669"/>
    <property type="project" value="UniProtKB-UniRule"/>
</dbReference>
<dbReference type="GO" id="GO:0003735">
    <property type="term" value="F:structural constituent of ribosome"/>
    <property type="evidence" value="ECO:0007669"/>
    <property type="project" value="InterPro"/>
</dbReference>
<dbReference type="GO" id="GO:0006412">
    <property type="term" value="P:translation"/>
    <property type="evidence" value="ECO:0007669"/>
    <property type="project" value="UniProtKB-UniRule"/>
</dbReference>
<dbReference type="FunFam" id="3.30.160.20:FF:000001">
    <property type="entry name" value="30S ribosomal protein S5"/>
    <property type="match status" value="1"/>
</dbReference>
<dbReference type="FunFam" id="3.30.230.10:FF:000002">
    <property type="entry name" value="30S ribosomal protein S5"/>
    <property type="match status" value="1"/>
</dbReference>
<dbReference type="Gene3D" id="3.30.160.20">
    <property type="match status" value="1"/>
</dbReference>
<dbReference type="Gene3D" id="3.30.230.10">
    <property type="match status" value="1"/>
</dbReference>
<dbReference type="HAMAP" id="MF_01307_B">
    <property type="entry name" value="Ribosomal_uS5_B"/>
    <property type="match status" value="1"/>
</dbReference>
<dbReference type="InterPro" id="IPR020568">
    <property type="entry name" value="Ribosomal_Su5_D2-typ_SF"/>
</dbReference>
<dbReference type="InterPro" id="IPR000851">
    <property type="entry name" value="Ribosomal_uS5"/>
</dbReference>
<dbReference type="InterPro" id="IPR005712">
    <property type="entry name" value="Ribosomal_uS5_bac-type"/>
</dbReference>
<dbReference type="InterPro" id="IPR005324">
    <property type="entry name" value="Ribosomal_uS5_C"/>
</dbReference>
<dbReference type="InterPro" id="IPR013810">
    <property type="entry name" value="Ribosomal_uS5_N"/>
</dbReference>
<dbReference type="InterPro" id="IPR018192">
    <property type="entry name" value="Ribosomal_uS5_N_CS"/>
</dbReference>
<dbReference type="InterPro" id="IPR014721">
    <property type="entry name" value="Ribsml_uS5_D2-typ_fold_subgr"/>
</dbReference>
<dbReference type="NCBIfam" id="TIGR01021">
    <property type="entry name" value="rpsE_bact"/>
    <property type="match status" value="1"/>
</dbReference>
<dbReference type="PANTHER" id="PTHR48277">
    <property type="entry name" value="MITOCHONDRIAL RIBOSOMAL PROTEIN S5"/>
    <property type="match status" value="1"/>
</dbReference>
<dbReference type="PANTHER" id="PTHR48277:SF1">
    <property type="entry name" value="MITOCHONDRIAL RIBOSOMAL PROTEIN S5"/>
    <property type="match status" value="1"/>
</dbReference>
<dbReference type="Pfam" id="PF00333">
    <property type="entry name" value="Ribosomal_S5"/>
    <property type="match status" value="1"/>
</dbReference>
<dbReference type="Pfam" id="PF03719">
    <property type="entry name" value="Ribosomal_S5_C"/>
    <property type="match status" value="1"/>
</dbReference>
<dbReference type="SUPFAM" id="SSF54768">
    <property type="entry name" value="dsRNA-binding domain-like"/>
    <property type="match status" value="1"/>
</dbReference>
<dbReference type="SUPFAM" id="SSF54211">
    <property type="entry name" value="Ribosomal protein S5 domain 2-like"/>
    <property type="match status" value="1"/>
</dbReference>
<dbReference type="PROSITE" id="PS00585">
    <property type="entry name" value="RIBOSOMAL_S5"/>
    <property type="match status" value="1"/>
</dbReference>
<dbReference type="PROSITE" id="PS50881">
    <property type="entry name" value="S5_DSRBD"/>
    <property type="match status" value="1"/>
</dbReference>
<proteinExistence type="inferred from homology"/>
<name>RS5_BORA1</name>
<sequence length="173" mass="18107">MAKVQGKNAAEKENDDGLREKMIAVNRVSKVVKGGRTMSFAALTVVGDGDGRIGMGKGKAREVPVSVQKAMEQARRGMFKVALKNGTLYHTVVGKHGASTVLISPAAEGTGVIAGGPMRAIFEVMGVRNVVAKSLGSSNPYNMVRATLNGLRNSLTPSEVAAKRGKSVEEILG</sequence>
<organism>
    <name type="scientific">Bordetella avium (strain 197N)</name>
    <dbReference type="NCBI Taxonomy" id="360910"/>
    <lineage>
        <taxon>Bacteria</taxon>
        <taxon>Pseudomonadati</taxon>
        <taxon>Pseudomonadota</taxon>
        <taxon>Betaproteobacteria</taxon>
        <taxon>Burkholderiales</taxon>
        <taxon>Alcaligenaceae</taxon>
        <taxon>Bordetella</taxon>
    </lineage>
</organism>